<proteinExistence type="evidence at protein level"/>
<organism>
    <name type="scientific">Mouse mammary tumor virus (strain BR6)</name>
    <name type="common">MMTV</name>
    <dbReference type="NCBI Taxonomy" id="11758"/>
    <lineage>
        <taxon>Viruses</taxon>
        <taxon>Riboviria</taxon>
        <taxon>Pararnavirae</taxon>
        <taxon>Artverviricota</taxon>
        <taxon>Revtraviricetes</taxon>
        <taxon>Ortervirales</taxon>
        <taxon>Retroviridae</taxon>
        <taxon>Orthoretrovirinae</taxon>
        <taxon>Betaretrovirus</taxon>
        <taxon>Mouse mammary tumor virus</taxon>
    </lineage>
</organism>
<name>PRO_MMTVB</name>
<accession>P10271</accession>
<dbReference type="EC" id="3.6.1.23" evidence="2"/>
<dbReference type="EC" id="3.4.23.-" evidence="5 7"/>
<dbReference type="EMBL" id="M15122">
    <property type="protein sequence ID" value="AAA46541.1"/>
    <property type="status" value="ALT_FRAME"/>
    <property type="molecule type" value="Genomic_RNA"/>
</dbReference>
<dbReference type="PIR" id="B26795">
    <property type="entry name" value="PRMVMM"/>
</dbReference>
<dbReference type="SMR" id="P10271"/>
<dbReference type="MEROPS" id="A02.010"/>
<dbReference type="Proteomes" id="UP000228400">
    <property type="component" value="Genome"/>
</dbReference>
<dbReference type="GO" id="GO:0019013">
    <property type="term" value="C:viral nucleocapsid"/>
    <property type="evidence" value="ECO:0007669"/>
    <property type="project" value="UniProtKB-KW"/>
</dbReference>
<dbReference type="GO" id="GO:0004190">
    <property type="term" value="F:aspartic-type endopeptidase activity"/>
    <property type="evidence" value="ECO:0007669"/>
    <property type="project" value="UniProtKB-KW"/>
</dbReference>
<dbReference type="GO" id="GO:0003677">
    <property type="term" value="F:DNA binding"/>
    <property type="evidence" value="ECO:0007669"/>
    <property type="project" value="UniProtKB-KW"/>
</dbReference>
<dbReference type="GO" id="GO:0004170">
    <property type="term" value="F:dUTP diphosphatase activity"/>
    <property type="evidence" value="ECO:0007669"/>
    <property type="project" value="UniProtKB-EC"/>
</dbReference>
<dbReference type="GO" id="GO:0039660">
    <property type="term" value="F:structural constituent of virion"/>
    <property type="evidence" value="ECO:0007669"/>
    <property type="project" value="UniProtKB-KW"/>
</dbReference>
<dbReference type="GO" id="GO:0008270">
    <property type="term" value="F:zinc ion binding"/>
    <property type="evidence" value="ECO:0007669"/>
    <property type="project" value="UniProtKB-KW"/>
</dbReference>
<dbReference type="GO" id="GO:0006508">
    <property type="term" value="P:proteolysis"/>
    <property type="evidence" value="ECO:0007669"/>
    <property type="project" value="UniProtKB-KW"/>
</dbReference>
<dbReference type="GO" id="GO:0075523">
    <property type="term" value="P:viral translational frameshifting"/>
    <property type="evidence" value="ECO:0007669"/>
    <property type="project" value="UniProtKB-KW"/>
</dbReference>
<dbReference type="CDD" id="cd05482">
    <property type="entry name" value="HIV_retropepsin_like"/>
    <property type="match status" value="1"/>
</dbReference>
<dbReference type="CDD" id="cd07557">
    <property type="entry name" value="trimeric_dUTPase"/>
    <property type="match status" value="1"/>
</dbReference>
<dbReference type="FunFam" id="1.10.1200.30:FF:000003">
    <property type="entry name" value="Gag polyprotein"/>
    <property type="match status" value="1"/>
</dbReference>
<dbReference type="FunFam" id="1.10.150.490:FF:000001">
    <property type="entry name" value="Gag polyprotein"/>
    <property type="match status" value="1"/>
</dbReference>
<dbReference type="FunFam" id="1.10.375.10:FF:000007">
    <property type="entry name" value="Gag polyprotein"/>
    <property type="match status" value="1"/>
</dbReference>
<dbReference type="FunFam" id="4.10.60.10:FF:000036">
    <property type="entry name" value="Gag polyprotein"/>
    <property type="match status" value="1"/>
</dbReference>
<dbReference type="FunFam" id="2.40.70.10:FF:000150">
    <property type="entry name" value="Gag-Pro polyprotein"/>
    <property type="match status" value="1"/>
</dbReference>
<dbReference type="Gene3D" id="1.10.1200.30">
    <property type="match status" value="1"/>
</dbReference>
<dbReference type="Gene3D" id="2.70.40.10">
    <property type="match status" value="1"/>
</dbReference>
<dbReference type="Gene3D" id="2.40.70.10">
    <property type="entry name" value="Acid Proteases"/>
    <property type="match status" value="1"/>
</dbReference>
<dbReference type="Gene3D" id="1.10.375.10">
    <property type="entry name" value="Human Immunodeficiency Virus Type 1 Capsid Protein"/>
    <property type="match status" value="1"/>
</dbReference>
<dbReference type="Gene3D" id="1.10.150.490">
    <property type="entry name" value="Retroviral GAG p10 protein"/>
    <property type="match status" value="1"/>
</dbReference>
<dbReference type="Gene3D" id="4.10.60.10">
    <property type="entry name" value="Zinc finger, CCHC-type"/>
    <property type="match status" value="1"/>
</dbReference>
<dbReference type="InterPro" id="IPR001969">
    <property type="entry name" value="Aspartic_peptidase_AS"/>
</dbReference>
<dbReference type="InterPro" id="IPR003322">
    <property type="entry name" value="B_retro_matrix"/>
</dbReference>
<dbReference type="InterPro" id="IPR038124">
    <property type="entry name" value="B_retro_matrix_sf"/>
</dbReference>
<dbReference type="InterPro" id="IPR029054">
    <property type="entry name" value="dUTPase-like"/>
</dbReference>
<dbReference type="InterPro" id="IPR036157">
    <property type="entry name" value="dUTPase-like_sf"/>
</dbReference>
<dbReference type="InterPro" id="IPR033704">
    <property type="entry name" value="dUTPase_trimeric"/>
</dbReference>
<dbReference type="InterPro" id="IPR045345">
    <property type="entry name" value="Gag_p24_C"/>
</dbReference>
<dbReference type="InterPro" id="IPR001995">
    <property type="entry name" value="Peptidase_A2_cat"/>
</dbReference>
<dbReference type="InterPro" id="IPR021109">
    <property type="entry name" value="Peptidase_aspartic_dom_sf"/>
</dbReference>
<dbReference type="InterPro" id="IPR050195">
    <property type="entry name" value="Primate_lentivir_Gag_pol-like"/>
</dbReference>
<dbReference type="InterPro" id="IPR034170">
    <property type="entry name" value="Retropepsin-like_cat_dom"/>
</dbReference>
<dbReference type="InterPro" id="IPR018061">
    <property type="entry name" value="Retropepsins"/>
</dbReference>
<dbReference type="InterPro" id="IPR008916">
    <property type="entry name" value="Retrov_capsid_C"/>
</dbReference>
<dbReference type="InterPro" id="IPR008919">
    <property type="entry name" value="Retrov_capsid_N"/>
</dbReference>
<dbReference type="InterPro" id="IPR010999">
    <property type="entry name" value="Retrovr_matrix"/>
</dbReference>
<dbReference type="InterPro" id="IPR001878">
    <property type="entry name" value="Znf_CCHC"/>
</dbReference>
<dbReference type="InterPro" id="IPR036875">
    <property type="entry name" value="Znf_CCHC_sf"/>
</dbReference>
<dbReference type="PANTHER" id="PTHR40389">
    <property type="entry name" value="ENDOGENOUS RETROVIRUS GROUP K MEMBER 24 GAG POLYPROTEIN-RELATED"/>
    <property type="match status" value="1"/>
</dbReference>
<dbReference type="PANTHER" id="PTHR40389:SF3">
    <property type="entry name" value="IGE-BINDING PROTEIN"/>
    <property type="match status" value="1"/>
</dbReference>
<dbReference type="Pfam" id="PF00692">
    <property type="entry name" value="dUTPase"/>
    <property type="match status" value="1"/>
</dbReference>
<dbReference type="Pfam" id="PF02337">
    <property type="entry name" value="Gag_p10"/>
    <property type="match status" value="1"/>
</dbReference>
<dbReference type="Pfam" id="PF00607">
    <property type="entry name" value="Gag_p24"/>
    <property type="match status" value="1"/>
</dbReference>
<dbReference type="Pfam" id="PF19317">
    <property type="entry name" value="Gag_p24_C"/>
    <property type="match status" value="1"/>
</dbReference>
<dbReference type="Pfam" id="PF00077">
    <property type="entry name" value="RVP"/>
    <property type="match status" value="1"/>
</dbReference>
<dbReference type="Pfam" id="PF00098">
    <property type="entry name" value="zf-CCHC"/>
    <property type="match status" value="1"/>
</dbReference>
<dbReference type="Pfam" id="PF14787">
    <property type="entry name" value="zf-CCHC_5"/>
    <property type="match status" value="1"/>
</dbReference>
<dbReference type="SMART" id="SM00343">
    <property type="entry name" value="ZnF_C2HC"/>
    <property type="match status" value="2"/>
</dbReference>
<dbReference type="SUPFAM" id="SSF50630">
    <property type="entry name" value="Acid proteases"/>
    <property type="match status" value="1"/>
</dbReference>
<dbReference type="SUPFAM" id="SSF51283">
    <property type="entry name" value="dUTPase-like"/>
    <property type="match status" value="1"/>
</dbReference>
<dbReference type="SUPFAM" id="SSF47836">
    <property type="entry name" value="Retroviral matrix proteins"/>
    <property type="match status" value="1"/>
</dbReference>
<dbReference type="SUPFAM" id="SSF47353">
    <property type="entry name" value="Retrovirus capsid dimerization domain-like"/>
    <property type="match status" value="1"/>
</dbReference>
<dbReference type="SUPFAM" id="SSF47943">
    <property type="entry name" value="Retrovirus capsid protein, N-terminal core domain"/>
    <property type="match status" value="1"/>
</dbReference>
<dbReference type="SUPFAM" id="SSF57756">
    <property type="entry name" value="Retrovirus zinc finger-like domains"/>
    <property type="match status" value="2"/>
</dbReference>
<dbReference type="PROSITE" id="PS50175">
    <property type="entry name" value="ASP_PROT_RETROV"/>
    <property type="match status" value="1"/>
</dbReference>
<dbReference type="PROSITE" id="PS00141">
    <property type="entry name" value="ASP_PROTEASE"/>
    <property type="match status" value="1"/>
</dbReference>
<dbReference type="PROSITE" id="PS50158">
    <property type="entry name" value="ZF_CCHC"/>
    <property type="match status" value="1"/>
</dbReference>
<evidence type="ECO:0000250" key="1">
    <source>
        <dbReference type="UniProtKB" id="P10258"/>
    </source>
</evidence>
<evidence type="ECO:0000250" key="2">
    <source>
        <dbReference type="UniProtKB" id="P11283"/>
    </source>
</evidence>
<evidence type="ECO:0000255" key="3"/>
<evidence type="ECO:0000255" key="4">
    <source>
        <dbReference type="PROSITE-ProRule" id="PRU00047"/>
    </source>
</evidence>
<evidence type="ECO:0000255" key="5">
    <source>
        <dbReference type="PROSITE-ProRule" id="PRU00275"/>
    </source>
</evidence>
<evidence type="ECO:0000256" key="6">
    <source>
        <dbReference type="SAM" id="MobiDB-lite"/>
    </source>
</evidence>
<evidence type="ECO:0000269" key="7">
    <source>
    </source>
</evidence>
<evidence type="ECO:0000269" key="8">
    <source>
    </source>
</evidence>
<evidence type="ECO:0000269" key="9">
    <source>
    </source>
</evidence>
<evidence type="ECO:0000305" key="10"/>
<organismHost>
    <name type="scientific">Mus musculus</name>
    <name type="common">Mouse</name>
    <dbReference type="NCBI Taxonomy" id="10090"/>
</organismHost>
<feature type="initiator methionine" description="Removed; by host" evidence="3">
    <location>
        <position position="1"/>
    </location>
</feature>
<feature type="chain" id="PRO_0000199549" description="Gag-Pro polyprotein">
    <location>
        <begin position="2"/>
        <end position="859"/>
    </location>
</feature>
<feature type="chain" id="PRO_0000442484" description="Matrix protein p10">
    <location>
        <begin position="2"/>
        <end position="99"/>
    </location>
</feature>
<feature type="chain" id="PRO_0000442485" description="Phosphorylated protein pp21">
    <location>
        <begin position="100"/>
        <end position="195"/>
    </location>
</feature>
<feature type="chain" id="PRO_0000442486" description="Protein p3">
    <location>
        <begin position="196"/>
        <end position="228"/>
    </location>
</feature>
<feature type="chain" id="PRO_0000442487" description="Protein p8">
    <location>
        <begin position="229"/>
        <end position="254"/>
    </location>
</feature>
<feature type="chain" id="PRO_0000442488" description="Protein n">
    <location>
        <begin position="255"/>
        <end position="269"/>
    </location>
</feature>
<feature type="chain" id="PRO_0000442489" description="Capsid protein p27">
    <location>
        <begin position="270"/>
        <end position="496"/>
    </location>
</feature>
<feature type="chain" id="PRO_0000442490" description="Nucleocapsid protein-dUTPase">
    <location>
        <begin position="497"/>
        <end position="745"/>
    </location>
</feature>
<feature type="chain" id="PRO_0000442491" description="Protease">
    <location>
        <begin position="746"/>
        <end position="860"/>
    </location>
</feature>
<feature type="domain" description="Peptidase A2" evidence="5">
    <location>
        <begin position="766"/>
        <end position="841"/>
    </location>
</feature>
<feature type="zinc finger region" description="CCHC-type" evidence="4">
    <location>
        <begin position="525"/>
        <end position="542"/>
    </location>
</feature>
<feature type="zinc finger region" description="CCHC-type 2" evidence="4">
    <location>
        <begin position="552"/>
        <end position="569"/>
    </location>
</feature>
<feature type="region of interest" description="Disordered" evidence="6">
    <location>
        <begin position="151"/>
        <end position="191"/>
    </location>
</feature>
<feature type="region of interest" description="Disordered" evidence="6">
    <location>
        <begin position="572"/>
        <end position="631"/>
    </location>
</feature>
<feature type="short sequence motif" description="PTAP/PSAP motif" evidence="10">
    <location>
        <begin position="305"/>
        <end position="308"/>
    </location>
</feature>
<feature type="compositionally biased region" description="Basic and acidic residues" evidence="6">
    <location>
        <begin position="151"/>
        <end position="169"/>
    </location>
</feature>
<feature type="compositionally biased region" description="Basic and acidic residues" evidence="6">
    <location>
        <begin position="178"/>
        <end position="191"/>
    </location>
</feature>
<feature type="compositionally biased region" description="Polar residues" evidence="6">
    <location>
        <begin position="584"/>
        <end position="599"/>
    </location>
</feature>
<feature type="active site" description="Protease; shared with dimeric partner" evidence="5">
    <location>
        <position position="771"/>
    </location>
</feature>
<feature type="site" description="Cleavage; by viral protease" evidence="7">
    <location>
        <begin position="99"/>
        <end position="100"/>
    </location>
</feature>
<feature type="site" description="Cleavage; by viral protease" evidence="7">
    <location>
        <begin position="195"/>
        <end position="196"/>
    </location>
</feature>
<feature type="site" description="Cleavage; by viral protease" evidence="7">
    <location>
        <begin position="228"/>
        <end position="229"/>
    </location>
</feature>
<feature type="site" description="Cleavage; by viral protease" evidence="7">
    <location>
        <begin position="254"/>
        <end position="255"/>
    </location>
</feature>
<feature type="site" description="Cleavage; by viral protease" evidence="7">
    <location>
        <begin position="269"/>
        <end position="270"/>
    </location>
</feature>
<feature type="site" description="Cleavage; by viral protease" evidence="7">
    <location>
        <begin position="496"/>
        <end position="497"/>
    </location>
</feature>
<feature type="site" description="Cleavage; by viral protease" evidence="7">
    <location>
        <begin position="745"/>
        <end position="746"/>
    </location>
</feature>
<feature type="lipid moiety-binding region" description="N-myristoyl glycine; by host" evidence="1">
    <location>
        <position position="2"/>
    </location>
</feature>
<comment type="function">
    <molecule>Matrix protein p10</molecule>
    <text evidence="10">Matrix protein.</text>
</comment>
<comment type="function">
    <text evidence="10">Nucleocapsid protein p14: Binds strongly to viral nucleic acids and promote their aggregation. Also destabilizes the nucleic acids duplexes via highly structured zinc-binding motifs.</text>
</comment>
<comment type="function">
    <molecule>Capsid protein p27</molecule>
    <text evidence="10">Capsid protein.</text>
</comment>
<comment type="function">
    <molecule>Protease</molecule>
    <text evidence="5">The aspartyl protease mediates proteolytic cleavages of Gag and Gag-Pol polyproteins during or shortly after the release of the virion from the plasma membrane. Cleavages take place as an ordered, step-wise cascade to yield mature proteins. This process is called maturation. Displays maximal activity during the budding process just prior to particle release from the cell.</text>
</comment>
<comment type="catalytic activity">
    <reaction evidence="2">
        <text>dUTP + H2O = dUMP + diphosphate + H(+)</text>
        <dbReference type="Rhea" id="RHEA:10248"/>
        <dbReference type="ChEBI" id="CHEBI:15377"/>
        <dbReference type="ChEBI" id="CHEBI:15378"/>
        <dbReference type="ChEBI" id="CHEBI:33019"/>
        <dbReference type="ChEBI" id="CHEBI:61555"/>
        <dbReference type="ChEBI" id="CHEBI:246422"/>
        <dbReference type="EC" id="3.6.1.23"/>
    </reaction>
</comment>
<comment type="activity regulation">
    <molecule>Protease</molecule>
    <text evidence="7">Inhibited by pepstatin A.</text>
</comment>
<comment type="biophysicochemical properties">
    <phDependence>
        <text evidence="7">Optimum pH is 4-6 for protease.</text>
    </phDependence>
</comment>
<comment type="subunit">
    <molecule>Matrix protein p10</molecule>
    <text evidence="1">Homodimer; when myristoylated (By similarity).</text>
</comment>
<comment type="subunit">
    <molecule>Protease</molecule>
    <text evidence="7">Homodimer (PubMed:1331110).</text>
</comment>
<comment type="subunit">
    <molecule>Nucleocapsid protein-dUTPase</molecule>
    <text evidence="1">NC-dUTPase is a homotrimer (By similarity).</text>
</comment>
<comment type="subcellular location">
    <molecule>Matrix protein p10</molecule>
    <subcellularLocation>
        <location evidence="8">Virion</location>
    </subcellularLocation>
</comment>
<comment type="subcellular location">
    <molecule>Capsid protein p27</molecule>
    <subcellularLocation>
        <location evidence="8">Virion</location>
    </subcellularLocation>
</comment>
<comment type="subcellular location">
    <molecule>Nucleocapsid protein-dUTPase</molecule>
    <subcellularLocation>
        <location evidence="8">Virion</location>
    </subcellularLocation>
</comment>
<comment type="alternative products">
    <event type="ribosomal frameshifting"/>
    <isoform>
        <id>P10271-1</id>
        <name>Gag-Pro polyprotein</name>
        <sequence type="displayed"/>
    </isoform>
    <isoform>
        <id>P10258-1</id>
        <name>Gag polyprotein</name>
        <sequence type="external"/>
    </isoform>
    <isoform>
        <id>P03365-1</id>
        <name>Gag-Pro-Pol polyprotein</name>
        <sequence type="external"/>
    </isoform>
</comment>
<comment type="domain">
    <molecule>Gag-Pro polyprotein</molecule>
    <text evidence="10">Late-budding domains (L domains) are short sequence motifs essential for viral particle release. They can occur individually or in close proximity within structural proteins. They interacts with sorting cellular proteins of the multivesicular body (MVB) pathway. Most of these proteins are class E vacuolar protein sorting factors belonging to ESCRT-I, ESCRT-II or ESCRT-III complexes. Gag-p27 contains one L domain: a PTAP/PSAP motif, which interacts with the UEV domain of TSG101.</text>
</comment>
<comment type="PTM">
    <molecule>Protease</molecule>
    <text evidence="7">Released by autocatalytic processing.</text>
</comment>
<comment type="PTM">
    <molecule>Gag-Pro polyprotein</molecule>
    <text evidence="1">Myristoylated. Myristoylation of the matrix (MA) domain mediates the transport and binding of Gag polyproteins to the host plasma membrane and is required for the assembly of viral particles.</text>
</comment>
<comment type="PTM">
    <molecule>Gag-Pro polyprotein</molecule>
    <text evidence="7">Specific enzymatic cleavages in vivo yield mature proteins.</text>
</comment>
<comment type="miscellaneous">
    <molecule>Isoform Gag-Pro polyprotein</molecule>
    <text evidence="9">Produced by -1 ribosomal frameshifting between gag-pro.</text>
</comment>
<comment type="sequence caution" evidence="10">
    <conflict type="frameshift">
        <sequence resource="EMBL-CDS" id="AAA46541"/>
    </conflict>
</comment>
<sequence>MGVSGSKGQKLFVSVLQRLLSERGLHVKESSAIEFYQFLIKVSPWFPEEGGLNLQDWKRVGREMKRYAAEHGTDSIPKQAYPIWLQLREILTEQSDLVLLSAEAKSVTEEELEEGLTGLLSTSSQEKTYGTRGTAYAEIDTEVDKLSEHIYDEPYEEKEKADKNEEKDHVRKIKKVVQRKENSEGKRKEKDSKAFLATDWNDDDLSPEDWDDLEEQAAHYHDDDELILPVKRKVVKKKPQALRRKPLPPVGFAGAMAEAREKGDLTFTFPVVFMGESDEDDTPVWEPLPLKTLKELQSAVRTMGPSAPYTLQVVDMVASQWLTPSDWHQTARATLSPGDYVLWRTEYEEKSKEMVQKAAGKRKGKVSLDMLLGTGQFLSPSSQIKLSKDVLKDVTTNAVLAWRAIPPPGVKKTVLAGLKQGNEESYETFISRLEEAVYRMMPRGEGSDILIKQLAWENANSLCQDLIRPIRKTGTIQDYIRACLDASPAVVQGMAYAAAMRGQKYSTFVKQTYGGGKGGQGAEGPVCFSCGKTGHIRKDCKDEKGSKRAPPGLCPRCKKGYHWKSECKSKFDKDGNPLPPLETNAENSKNLVKGQSPSPAQKGDGVKGSGLNPEAPPFTIHDLPRGTPGSAGLDLSSQKDLILSLEDGVSLVPTLVKGTLPEGTTGLIIGRSSNYKKGLEVLPGVIDSDFQGEIKVMVKAAKNAVIIHKGERIAQLLLLPYLKLPNPVIKEERGSEGFGSTSHVHWVQEISDSRPMLHIYLNGRRFLGLLDTGADKTCIAGRDWPANWPIHQTESSLQGLGMACGVARSSQPLRWQHEDKSGIIHPFVIPTLPFTLWGRDIMKDIKVRLMTDSPDDSQDL</sequence>
<protein>
    <recommendedName>
        <fullName>Gag-Pro polyprotein</fullName>
    </recommendedName>
    <component>
        <recommendedName>
            <fullName>Matrix protein p10</fullName>
        </recommendedName>
    </component>
    <component>
        <recommendedName>
            <fullName>Phosphorylated protein pp21</fullName>
        </recommendedName>
    </component>
    <component>
        <recommendedName>
            <fullName>Protein p3</fullName>
        </recommendedName>
    </component>
    <component>
        <recommendedName>
            <fullName>Protein p8</fullName>
        </recommendedName>
    </component>
    <component>
        <recommendedName>
            <fullName>Protein n</fullName>
        </recommendedName>
    </component>
    <component>
        <recommendedName>
            <fullName>Capsid protein p27</fullName>
        </recommendedName>
    </component>
    <component>
        <recommendedName>
            <fullName>Nucleocapsid protein-dUTPase</fullName>
            <shortName>NC-dUTPase</shortName>
            <ecNumber evidence="2">3.6.1.23</ecNumber>
        </recommendedName>
    </component>
    <component>
        <recommendedName>
            <fullName>Protease</fullName>
            <ecNumber evidence="5 7">3.4.23.-</ecNumber>
        </recommendedName>
    </component>
</protein>
<gene>
    <name type="primary">gag-pro</name>
</gene>
<keyword id="KW-0064">Aspartyl protease</keyword>
<keyword id="KW-0167">Capsid protein</keyword>
<keyword id="KW-0238">DNA-binding</keyword>
<keyword id="KW-0378">Hydrolase</keyword>
<keyword id="KW-0449">Lipoprotein</keyword>
<keyword id="KW-0460">Magnesium</keyword>
<keyword id="KW-0479">Metal-binding</keyword>
<keyword id="KW-0519">Myristate</keyword>
<keyword id="KW-0645">Protease</keyword>
<keyword id="KW-1185">Reference proteome</keyword>
<keyword id="KW-0688">Ribosomal frameshifting</keyword>
<keyword id="KW-0468">Viral matrix protein</keyword>
<keyword id="KW-0543">Viral nucleoprotein</keyword>
<keyword id="KW-0946">Virion</keyword>
<keyword id="KW-0862">Zinc</keyword>
<keyword id="KW-0863">Zinc-finger</keyword>
<reference key="1">
    <citation type="journal article" date="1987" name="J. Virol.">
        <title>Complete nucleotide sequence of a milk-transmitted mouse mammary tumor virus: two frameshift suppression events are required for translation of gag and pol.</title>
        <authorList>
            <person name="Moore R."/>
            <person name="Dixon M."/>
            <person name="Smith R."/>
            <person name="Peters G."/>
            <person name="Dickson C."/>
        </authorList>
    </citation>
    <scope>NUCLEOTIDE SEQUENCE [GENOMIC RNA]</scope>
    <scope>RIBOSOMAL FRAMESHIFT</scope>
</reference>
<reference key="2">
    <citation type="journal article" date="1978" name="Virology">
        <title>Serological and biochemical characterization of the mouse mammary tumor virus with localization of p10.</title>
        <authorList>
            <person name="Cardiff R.D."/>
            <person name="Puentes M.J."/>
            <person name="Young L.J."/>
            <person name="Smith G.H."/>
            <person name="Teramoto Y.A."/>
            <person name="Altrock B.W."/>
            <person name="Pratt T.S."/>
        </authorList>
    </citation>
    <scope>SUBCELLULAR LOCATION (MATRIX PROTEIN P10)</scope>
    <scope>SUBCELLULAR LOCATION (CAPSID PROTEIN P27)</scope>
    <scope>SUBCELLULAR LOCATION (NUCLEOCAPSID PROTEIN P14)</scope>
</reference>
<reference key="3">
    <citation type="journal article" date="1992" name="J. Biol. Chem.">
        <title>Purification and characterization of the mouse mammary tumor virus protease expressed in Escherichia coli.</title>
        <authorList>
            <person name="Menendez-Arias L."/>
            <person name="Young M."/>
            <person name="Oroszlan S."/>
        </authorList>
    </citation>
    <scope>PROTEOLYTIC CLEAVAGE (GAG-PRO POLYPROTEIN)</scope>
    <scope>CHARACTERIZATION (PROTEASE)</scope>
    <scope>SUBUNIT (PROTEASE)</scope>
    <scope>CATALYTIC ACTIVITY (PROTEASE)</scope>
    <scope>ACTIVITY REGULATION (PROTEASE)</scope>
    <scope>BIOPHYSICOCHEMICAL PROPERTIES (PROTEASE)</scope>
</reference>